<gene>
    <name type="ordered locus">lmo1070</name>
</gene>
<keyword id="KW-1185">Reference proteome</keyword>
<name>Y1070_LISMO</name>
<dbReference type="EMBL" id="AL591977">
    <property type="protein sequence ID" value="CAC99148.1"/>
    <property type="molecule type" value="Genomic_DNA"/>
</dbReference>
<dbReference type="PIR" id="AF1208">
    <property type="entry name" value="AF1208"/>
</dbReference>
<dbReference type="RefSeq" id="NP_464595.1">
    <property type="nucleotide sequence ID" value="NC_003210.1"/>
</dbReference>
<dbReference type="RefSeq" id="WP_003725573.1">
    <property type="nucleotide sequence ID" value="NZ_CP149495.1"/>
</dbReference>
<dbReference type="SMR" id="Q8Y848"/>
<dbReference type="STRING" id="169963.gene:17593726"/>
<dbReference type="PaxDb" id="169963-lmo1070"/>
<dbReference type="EnsemblBacteria" id="CAC99148">
    <property type="protein sequence ID" value="CAC99148"/>
    <property type="gene ID" value="CAC99148"/>
</dbReference>
<dbReference type="GeneID" id="986295"/>
<dbReference type="KEGG" id="lmo:lmo1070"/>
<dbReference type="PATRIC" id="fig|169963.11.peg.1100"/>
<dbReference type="eggNOG" id="COG4838">
    <property type="taxonomic scope" value="Bacteria"/>
</dbReference>
<dbReference type="HOGENOM" id="CLU_160493_1_0_9"/>
<dbReference type="OrthoDB" id="2135235at2"/>
<dbReference type="PhylomeDB" id="Q8Y848"/>
<dbReference type="BioCyc" id="LMON169963:LMO1070-MONOMER"/>
<dbReference type="Proteomes" id="UP000000817">
    <property type="component" value="Chromosome"/>
</dbReference>
<dbReference type="Gene3D" id="1.10.287.750">
    <property type="entry name" value="SO2669-like"/>
    <property type="match status" value="1"/>
</dbReference>
<dbReference type="HAMAP" id="MF_01560">
    <property type="entry name" value="UPF0358"/>
    <property type="match status" value="1"/>
</dbReference>
<dbReference type="InterPro" id="IPR009983">
    <property type="entry name" value="UPF0358"/>
</dbReference>
<dbReference type="InterPro" id="IPR036270">
    <property type="entry name" value="UPF0358_sf"/>
</dbReference>
<dbReference type="NCBIfam" id="NF010187">
    <property type="entry name" value="PRK13666.1"/>
    <property type="match status" value="1"/>
</dbReference>
<dbReference type="Pfam" id="PF07408">
    <property type="entry name" value="DUF1507"/>
    <property type="match status" value="1"/>
</dbReference>
<dbReference type="SUPFAM" id="SSF140404">
    <property type="entry name" value="EF2458-like"/>
    <property type="match status" value="1"/>
</dbReference>
<sequence>MANKKIDHREEAVELLKQDAKRILQLIKVQMDNLTLPQCPAYEEVLDTQMYGLSREINFATRLGLIEPEEGKKLMSTLEKELSTLHELSMSKK</sequence>
<feature type="chain" id="PRO_0000110648" description="UPF0358 protein lmo1070">
    <location>
        <begin position="1"/>
        <end position="93"/>
    </location>
</feature>
<proteinExistence type="inferred from homology"/>
<accession>Q8Y848</accession>
<reference key="1">
    <citation type="journal article" date="2001" name="Science">
        <title>Comparative genomics of Listeria species.</title>
        <authorList>
            <person name="Glaser P."/>
            <person name="Frangeul L."/>
            <person name="Buchrieser C."/>
            <person name="Rusniok C."/>
            <person name="Amend A."/>
            <person name="Baquero F."/>
            <person name="Berche P."/>
            <person name="Bloecker H."/>
            <person name="Brandt P."/>
            <person name="Chakraborty T."/>
            <person name="Charbit A."/>
            <person name="Chetouani F."/>
            <person name="Couve E."/>
            <person name="de Daruvar A."/>
            <person name="Dehoux P."/>
            <person name="Domann E."/>
            <person name="Dominguez-Bernal G."/>
            <person name="Duchaud E."/>
            <person name="Durant L."/>
            <person name="Dussurget O."/>
            <person name="Entian K.-D."/>
            <person name="Fsihi H."/>
            <person name="Garcia-del Portillo F."/>
            <person name="Garrido P."/>
            <person name="Gautier L."/>
            <person name="Goebel W."/>
            <person name="Gomez-Lopez N."/>
            <person name="Hain T."/>
            <person name="Hauf J."/>
            <person name="Jackson D."/>
            <person name="Jones L.-M."/>
            <person name="Kaerst U."/>
            <person name="Kreft J."/>
            <person name="Kuhn M."/>
            <person name="Kunst F."/>
            <person name="Kurapkat G."/>
            <person name="Madueno E."/>
            <person name="Maitournam A."/>
            <person name="Mata Vicente J."/>
            <person name="Ng E."/>
            <person name="Nedjari H."/>
            <person name="Nordsiek G."/>
            <person name="Novella S."/>
            <person name="de Pablos B."/>
            <person name="Perez-Diaz J.-C."/>
            <person name="Purcell R."/>
            <person name="Remmel B."/>
            <person name="Rose M."/>
            <person name="Schlueter T."/>
            <person name="Simoes N."/>
            <person name="Tierrez A."/>
            <person name="Vazquez-Boland J.-A."/>
            <person name="Voss H."/>
            <person name="Wehland J."/>
            <person name="Cossart P."/>
        </authorList>
    </citation>
    <scope>NUCLEOTIDE SEQUENCE [LARGE SCALE GENOMIC DNA]</scope>
    <source>
        <strain>ATCC BAA-679 / EGD-e</strain>
    </source>
</reference>
<protein>
    <recommendedName>
        <fullName evidence="1">UPF0358 protein lmo1070</fullName>
    </recommendedName>
</protein>
<evidence type="ECO:0000255" key="1">
    <source>
        <dbReference type="HAMAP-Rule" id="MF_01560"/>
    </source>
</evidence>
<comment type="similarity">
    <text evidence="1">Belongs to the UPF0358 family.</text>
</comment>
<organism>
    <name type="scientific">Listeria monocytogenes serovar 1/2a (strain ATCC BAA-679 / EGD-e)</name>
    <dbReference type="NCBI Taxonomy" id="169963"/>
    <lineage>
        <taxon>Bacteria</taxon>
        <taxon>Bacillati</taxon>
        <taxon>Bacillota</taxon>
        <taxon>Bacilli</taxon>
        <taxon>Bacillales</taxon>
        <taxon>Listeriaceae</taxon>
        <taxon>Listeria</taxon>
    </lineage>
</organism>